<protein>
    <recommendedName>
        <fullName>25S rRNA (uridine(2843)-N(3))-methyltransferase</fullName>
        <ecNumber evidence="2">2.1.1.312</ecNumber>
    </recommendedName>
    <alternativeName>
        <fullName>Base methyltransferase of 25S RNA 6</fullName>
    </alternativeName>
</protein>
<dbReference type="EC" id="2.1.1.312" evidence="2"/>
<dbReference type="EMBL" id="X94607">
    <property type="protein sequence ID" value="CAA64309.1"/>
    <property type="molecule type" value="Genomic_DNA"/>
</dbReference>
<dbReference type="EMBL" id="Z73235">
    <property type="protein sequence ID" value="CAA97619.1"/>
    <property type="molecule type" value="Genomic_DNA"/>
</dbReference>
<dbReference type="EMBL" id="BK006945">
    <property type="protein sequence ID" value="DAA09380.1"/>
    <property type="molecule type" value="Genomic_DNA"/>
</dbReference>
<dbReference type="PIR" id="S61636">
    <property type="entry name" value="S61636"/>
</dbReference>
<dbReference type="RefSeq" id="NP_013164.1">
    <property type="nucleotide sequence ID" value="NM_001181950.1"/>
</dbReference>
<dbReference type="BioGRID" id="31337">
    <property type="interactions" value="61"/>
</dbReference>
<dbReference type="DIP" id="DIP-4828N"/>
<dbReference type="FunCoup" id="Q12291">
    <property type="interactions" value="62"/>
</dbReference>
<dbReference type="IntAct" id="Q12291">
    <property type="interactions" value="2"/>
</dbReference>
<dbReference type="STRING" id="4932.YLR063W"/>
<dbReference type="iPTMnet" id="Q12291"/>
<dbReference type="PaxDb" id="4932-YLR063W"/>
<dbReference type="PeptideAtlas" id="Q12291"/>
<dbReference type="EnsemblFungi" id="YLR063W_mRNA">
    <property type="protein sequence ID" value="YLR063W"/>
    <property type="gene ID" value="YLR063W"/>
</dbReference>
<dbReference type="GeneID" id="850752"/>
<dbReference type="KEGG" id="sce:YLR063W"/>
<dbReference type="AGR" id="SGD:S000004053"/>
<dbReference type="SGD" id="S000004053">
    <property type="gene designation" value="BMT6"/>
</dbReference>
<dbReference type="VEuPathDB" id="FungiDB:YLR063W"/>
<dbReference type="eggNOG" id="ENOG502QR34">
    <property type="taxonomic scope" value="Eukaryota"/>
</dbReference>
<dbReference type="GeneTree" id="ENSGT00530000068169"/>
<dbReference type="HOGENOM" id="CLU_028833_1_0_1"/>
<dbReference type="InParanoid" id="Q12291"/>
<dbReference type="OMA" id="DMRYQVH"/>
<dbReference type="OrthoDB" id="6419443at2759"/>
<dbReference type="BioCyc" id="MetaCyc:G3O-32216-MONOMER"/>
<dbReference type="BioCyc" id="YEAST:G3O-32216-MONOMER"/>
<dbReference type="BRENDA" id="2.1.1.312">
    <property type="organism ID" value="984"/>
</dbReference>
<dbReference type="BioGRID-ORCS" id="850752">
    <property type="hits" value="0 hits in 10 CRISPR screens"/>
</dbReference>
<dbReference type="PRO" id="PR:Q12291"/>
<dbReference type="Proteomes" id="UP000002311">
    <property type="component" value="Chromosome XII"/>
</dbReference>
<dbReference type="RNAct" id="Q12291">
    <property type="molecule type" value="protein"/>
</dbReference>
<dbReference type="GO" id="GO:0005737">
    <property type="term" value="C:cytoplasm"/>
    <property type="evidence" value="ECO:0000314"/>
    <property type="project" value="SGD"/>
</dbReference>
<dbReference type="GO" id="GO:0005634">
    <property type="term" value="C:nucleus"/>
    <property type="evidence" value="ECO:0007669"/>
    <property type="project" value="UniProtKB-SubCell"/>
</dbReference>
<dbReference type="GO" id="GO:0070042">
    <property type="term" value="F:rRNA (uridine-N3-)-methyltransferase activity"/>
    <property type="evidence" value="ECO:0000315"/>
    <property type="project" value="SGD"/>
</dbReference>
<dbReference type="GO" id="GO:0008757">
    <property type="term" value="F:S-adenosylmethionine-dependent methyltransferase activity"/>
    <property type="evidence" value="ECO:0000255"/>
    <property type="project" value="SGD"/>
</dbReference>
<dbReference type="GO" id="GO:0070475">
    <property type="term" value="P:rRNA base methylation"/>
    <property type="evidence" value="ECO:0000315"/>
    <property type="project" value="SGD"/>
</dbReference>
<dbReference type="InterPro" id="IPR021463">
    <property type="entry name" value="Methyltransf_34"/>
</dbReference>
<dbReference type="Pfam" id="PF11312">
    <property type="entry name" value="Methyltransf_34"/>
    <property type="match status" value="1"/>
</dbReference>
<proteinExistence type="evidence at protein level"/>
<organism>
    <name type="scientific">Saccharomyces cerevisiae (strain ATCC 204508 / S288c)</name>
    <name type="common">Baker's yeast</name>
    <dbReference type="NCBI Taxonomy" id="559292"/>
    <lineage>
        <taxon>Eukaryota</taxon>
        <taxon>Fungi</taxon>
        <taxon>Dikarya</taxon>
        <taxon>Ascomycota</taxon>
        <taxon>Saccharomycotina</taxon>
        <taxon>Saccharomycetes</taxon>
        <taxon>Saccharomycetales</taxon>
        <taxon>Saccharomycetaceae</taxon>
        <taxon>Saccharomyces</taxon>
    </lineage>
</organism>
<comment type="function">
    <text evidence="2">S-adenosyl-L-methionine-dependent methyltransferase that specifically methylates the N(3) position of uridine 2843 (m3U2843) in 25S rRNA.</text>
</comment>
<comment type="catalytic activity">
    <reaction evidence="2">
        <text>uridine(2843) in 25S rRNA + S-adenosyl-L-methionine = N(3)-methyluridine(2843) in 25S rRNA + S-adenosyl-L-homocysteine + H(+)</text>
        <dbReference type="Rhea" id="RHEA:43184"/>
        <dbReference type="Rhea" id="RHEA-COMP:10393"/>
        <dbReference type="Rhea" id="RHEA-COMP:10394"/>
        <dbReference type="ChEBI" id="CHEBI:15378"/>
        <dbReference type="ChEBI" id="CHEBI:57856"/>
        <dbReference type="ChEBI" id="CHEBI:59789"/>
        <dbReference type="ChEBI" id="CHEBI:65315"/>
        <dbReference type="ChEBI" id="CHEBI:74502"/>
        <dbReference type="EC" id="2.1.1.312"/>
    </reaction>
</comment>
<comment type="subcellular location">
    <subcellularLocation>
        <location evidence="1 2">Cytoplasm</location>
    </subcellularLocation>
    <subcellularLocation>
        <location evidence="2">Nucleus</location>
    </subcellularLocation>
    <text evidence="2">Localizes predominantly to the cytoplasm, with minor localizations in the nucleus (PubMed:24335083). Associates with pre-60S ribosomal particles (PubMed:24335083).</text>
</comment>
<comment type="similarity">
    <text evidence="3">Belongs to the class I-like SAM-binding methyltransferase superfamily.</text>
</comment>
<keyword id="KW-0963">Cytoplasm</keyword>
<keyword id="KW-0489">Methyltransferase</keyword>
<keyword id="KW-0539">Nucleus</keyword>
<keyword id="KW-1185">Reference proteome</keyword>
<keyword id="KW-0698">rRNA processing</keyword>
<keyword id="KW-0949">S-adenosyl-L-methionine</keyword>
<keyword id="KW-0808">Transferase</keyword>
<feature type="chain" id="PRO_0000247230" description="25S rRNA (uridine(2843)-N(3))-methyltransferase">
    <location>
        <begin position="1"/>
        <end position="365"/>
    </location>
</feature>
<feature type="mutagenesis site" description="Abolishes methyltransferase activity." evidence="2">
    <original>G</original>
    <variation>R</variation>
    <location>
        <position position="294"/>
    </location>
</feature>
<evidence type="ECO:0000269" key="1">
    <source>
    </source>
</evidence>
<evidence type="ECO:0000269" key="2">
    <source>
    </source>
</evidence>
<evidence type="ECO:0000305" key="3"/>
<reference key="1">
    <citation type="journal article" date="1997" name="Nature">
        <title>The nucleotide sequence of Saccharomyces cerevisiae chromosome XII.</title>
        <authorList>
            <person name="Johnston M."/>
            <person name="Hillier L.W."/>
            <person name="Riles L."/>
            <person name="Albermann K."/>
            <person name="Andre B."/>
            <person name="Ansorge W."/>
            <person name="Benes V."/>
            <person name="Brueckner M."/>
            <person name="Delius H."/>
            <person name="Dubois E."/>
            <person name="Duesterhoeft A."/>
            <person name="Entian K.-D."/>
            <person name="Floeth M."/>
            <person name="Goffeau A."/>
            <person name="Hebling U."/>
            <person name="Heumann K."/>
            <person name="Heuss-Neitzel D."/>
            <person name="Hilbert H."/>
            <person name="Hilger F."/>
            <person name="Kleine K."/>
            <person name="Koetter P."/>
            <person name="Louis E.J."/>
            <person name="Messenguy F."/>
            <person name="Mewes H.-W."/>
            <person name="Miosga T."/>
            <person name="Moestl D."/>
            <person name="Mueller-Auer S."/>
            <person name="Nentwich U."/>
            <person name="Obermaier B."/>
            <person name="Piravandi E."/>
            <person name="Pohl T.M."/>
            <person name="Portetelle D."/>
            <person name="Purnelle B."/>
            <person name="Rechmann S."/>
            <person name="Rieger M."/>
            <person name="Rinke M."/>
            <person name="Rose M."/>
            <person name="Scharfe M."/>
            <person name="Scherens B."/>
            <person name="Scholler P."/>
            <person name="Schwager C."/>
            <person name="Schwarz S."/>
            <person name="Underwood A.P."/>
            <person name="Urrestarazu L.A."/>
            <person name="Vandenbol M."/>
            <person name="Verhasselt P."/>
            <person name="Vierendeels F."/>
            <person name="Voet M."/>
            <person name="Volckaert G."/>
            <person name="Voss H."/>
            <person name="Wambutt R."/>
            <person name="Wedler E."/>
            <person name="Wedler H."/>
            <person name="Zimmermann F.K."/>
            <person name="Zollner A."/>
            <person name="Hani J."/>
            <person name="Hoheisel J.D."/>
        </authorList>
    </citation>
    <scope>NUCLEOTIDE SEQUENCE [LARGE SCALE GENOMIC DNA]</scope>
    <source>
        <strain>ATCC 204508 / S288c</strain>
    </source>
</reference>
<reference key="2">
    <citation type="journal article" date="2014" name="G3 (Bethesda)">
        <title>The reference genome sequence of Saccharomyces cerevisiae: Then and now.</title>
        <authorList>
            <person name="Engel S.R."/>
            <person name="Dietrich F.S."/>
            <person name="Fisk D.G."/>
            <person name="Binkley G."/>
            <person name="Balakrishnan R."/>
            <person name="Costanzo M.C."/>
            <person name="Dwight S.S."/>
            <person name="Hitz B.C."/>
            <person name="Karra K."/>
            <person name="Nash R.S."/>
            <person name="Weng S."/>
            <person name="Wong E.D."/>
            <person name="Lloyd P."/>
            <person name="Skrzypek M.S."/>
            <person name="Miyasato S.R."/>
            <person name="Simison M."/>
            <person name="Cherry J.M."/>
        </authorList>
    </citation>
    <scope>GENOME REANNOTATION</scope>
    <source>
        <strain>ATCC 204508 / S288c</strain>
    </source>
</reference>
<reference key="3">
    <citation type="journal article" date="2003" name="Nature">
        <title>Global analysis of protein localization in budding yeast.</title>
        <authorList>
            <person name="Huh W.-K."/>
            <person name="Falvo J.V."/>
            <person name="Gerke L.C."/>
            <person name="Carroll A.S."/>
            <person name="Howson R.W."/>
            <person name="Weissman J.S."/>
            <person name="O'Shea E.K."/>
        </authorList>
    </citation>
    <scope>SUBCELLULAR LOCATION [LARGE SCALE ANALYSIS]</scope>
</reference>
<reference key="4">
    <citation type="journal article" date="2014" name="Nucleic Acids Res.">
        <title>Identification of novel methyltransferases, Bmt5 and Bmt6, responsible for the m3U methylations of 25S rRNA in Saccharomyces cerevisiae.</title>
        <authorList>
            <person name="Sharma S."/>
            <person name="Yang J."/>
            <person name="Duttmann S."/>
            <person name="Watzinger P."/>
            <person name="Kotter P."/>
            <person name="Entian K.D."/>
        </authorList>
    </citation>
    <scope>FUNCTION</scope>
    <scope>CATALYTIC ACTIVITY</scope>
    <scope>SUBCELLULAR LOCATION</scope>
    <scope>MUTAGENESIS OF GLY-294</scope>
</reference>
<sequence>MLLMRRFAFLTSSVYFKYIPIYSQYHYSSQFPINMNPKKVAQLPVHNKSTLPPQEIIDLFKITFLEELYPKDQDNEKSPLTEQIQAVKSDLYNRDYNAAFNNDSKRIAYCCRWSPSRATSYASVFAHFPELLKIIRCEIDDKDSNVLCIGGGAGGELVALASIFTLSRDFSSKFASALKIDNEVNKKPRNLNIQLVDIADWSTVVEKLTATIKSKWLYGDSEAESFNVNFTHKDCLQMTEPQDIKIYQGLDLITLLFTTNELFTQKKVESIKFLQRLNENCAPGCHLLILESAGSYSHITINNKKFPIQFLIDTILVGNRKDKGTTGPWSLVSENDSIWYRMDPKLDYSIPLENMRFFYRLYVKN</sequence>
<gene>
    <name type="primary">BMT6</name>
    <name type="ordered locus">YLR063W</name>
    <name type="ORF">L2174</name>
</gene>
<name>BMT6_YEAST</name>
<accession>Q12291</accession>
<accession>D6VY64</accession>